<dbReference type="EMBL" id="AE001826">
    <property type="protein sequence ID" value="AAF12574.1"/>
    <property type="status" value="ALT_INIT"/>
    <property type="molecule type" value="Genomic_DNA"/>
</dbReference>
<dbReference type="PIR" id="D75619">
    <property type="entry name" value="D75619"/>
</dbReference>
<dbReference type="RefSeq" id="NP_051555.1">
    <property type="nucleotide sequence ID" value="NC_000958.1"/>
</dbReference>
<dbReference type="SMR" id="Q9RZU9"/>
<dbReference type="EnsemblBacteria" id="AAF12574">
    <property type="protein sequence ID" value="AAF12574"/>
    <property type="gene ID" value="DR_B0012"/>
</dbReference>
<dbReference type="KEGG" id="dra:DR_B0012"/>
<dbReference type="PATRIC" id="fig|243230.17.peg.10"/>
<dbReference type="HOGENOM" id="CLU_019250_2_2_0"/>
<dbReference type="InParanoid" id="Q9RZU9"/>
<dbReference type="OrthoDB" id="9808302at2"/>
<dbReference type="UniPathway" id="UPA00148"/>
<dbReference type="Proteomes" id="UP000002524">
    <property type="component" value="Plasmid MP1"/>
</dbReference>
<dbReference type="GO" id="GO:0015420">
    <property type="term" value="F:ABC-type vitamin B12 transporter activity"/>
    <property type="evidence" value="ECO:0007669"/>
    <property type="project" value="UniProtKB-UniRule"/>
</dbReference>
<dbReference type="GO" id="GO:0003824">
    <property type="term" value="F:catalytic activity"/>
    <property type="evidence" value="ECO:0007669"/>
    <property type="project" value="InterPro"/>
</dbReference>
<dbReference type="GO" id="GO:0009236">
    <property type="term" value="P:cobalamin biosynthetic process"/>
    <property type="evidence" value="ECO:0007669"/>
    <property type="project" value="UniProtKB-UniRule"/>
</dbReference>
<dbReference type="CDD" id="cd05389">
    <property type="entry name" value="CobQ_N"/>
    <property type="match status" value="1"/>
</dbReference>
<dbReference type="CDD" id="cd01750">
    <property type="entry name" value="GATase1_CobQ"/>
    <property type="match status" value="1"/>
</dbReference>
<dbReference type="Gene3D" id="3.40.50.880">
    <property type="match status" value="1"/>
</dbReference>
<dbReference type="Gene3D" id="3.40.50.300">
    <property type="entry name" value="P-loop containing nucleotide triphosphate hydrolases"/>
    <property type="match status" value="1"/>
</dbReference>
<dbReference type="HAMAP" id="MF_00028">
    <property type="entry name" value="CobQ"/>
    <property type="match status" value="1"/>
</dbReference>
<dbReference type="InterPro" id="IPR029062">
    <property type="entry name" value="Class_I_gatase-like"/>
</dbReference>
<dbReference type="InterPro" id="IPR002586">
    <property type="entry name" value="CobQ/CobB/MinD/ParA_Nub-bd_dom"/>
</dbReference>
<dbReference type="InterPro" id="IPR033949">
    <property type="entry name" value="CobQ_GATase1"/>
</dbReference>
<dbReference type="InterPro" id="IPR047045">
    <property type="entry name" value="CobQ_N"/>
</dbReference>
<dbReference type="InterPro" id="IPR004459">
    <property type="entry name" value="CobQ_synth"/>
</dbReference>
<dbReference type="InterPro" id="IPR011698">
    <property type="entry name" value="GATase_3"/>
</dbReference>
<dbReference type="InterPro" id="IPR027417">
    <property type="entry name" value="P-loop_NTPase"/>
</dbReference>
<dbReference type="NCBIfam" id="TIGR00313">
    <property type="entry name" value="cobQ"/>
    <property type="match status" value="1"/>
</dbReference>
<dbReference type="NCBIfam" id="NF001989">
    <property type="entry name" value="PRK00784.1"/>
    <property type="match status" value="1"/>
</dbReference>
<dbReference type="PANTHER" id="PTHR21343:SF1">
    <property type="entry name" value="COBYRIC ACID SYNTHASE"/>
    <property type="match status" value="1"/>
</dbReference>
<dbReference type="PANTHER" id="PTHR21343">
    <property type="entry name" value="DETHIOBIOTIN SYNTHETASE"/>
    <property type="match status" value="1"/>
</dbReference>
<dbReference type="Pfam" id="PF01656">
    <property type="entry name" value="CbiA"/>
    <property type="match status" value="1"/>
</dbReference>
<dbReference type="Pfam" id="PF07685">
    <property type="entry name" value="GATase_3"/>
    <property type="match status" value="1"/>
</dbReference>
<dbReference type="SUPFAM" id="SSF52317">
    <property type="entry name" value="Class I glutamine amidotransferase-like"/>
    <property type="match status" value="1"/>
</dbReference>
<dbReference type="SUPFAM" id="SSF52540">
    <property type="entry name" value="P-loop containing nucleoside triphosphate hydrolases"/>
    <property type="match status" value="1"/>
</dbReference>
<dbReference type="PROSITE" id="PS51274">
    <property type="entry name" value="GATASE_COBBQ"/>
    <property type="match status" value="1"/>
</dbReference>
<accession>Q9RZU9</accession>
<feature type="chain" id="PRO_0000141301" description="Cobyric acid synthase">
    <location>
        <begin position="1"/>
        <end position="474"/>
    </location>
</feature>
<feature type="domain" description="GATase cobBQ-type" evidence="1">
    <location>
        <begin position="251"/>
        <end position="431"/>
    </location>
</feature>
<feature type="active site" description="Nucleophile" evidence="1">
    <location>
        <position position="328"/>
    </location>
</feature>
<feature type="active site" evidence="1">
    <location>
        <position position="423"/>
    </location>
</feature>
<comment type="function">
    <text evidence="1">Catalyzes amidations at positions B, D, E, and G on adenosylcobyrinic A,C-diamide. NH(2) groups are provided by glutamine, and one molecule of ATP is hydrogenolyzed for each amidation.</text>
</comment>
<comment type="pathway">
    <text evidence="1">Cofactor biosynthesis; adenosylcobalamin biosynthesis.</text>
</comment>
<comment type="similarity">
    <text evidence="1">Belongs to the CobB/CobQ family. CobQ subfamily.</text>
</comment>
<comment type="sequence caution" evidence="2">
    <conflict type="erroneous initiation">
        <sequence resource="EMBL-CDS" id="AAF12574"/>
    </conflict>
</comment>
<name>COBQ_DEIRA</name>
<organism>
    <name type="scientific">Deinococcus radiodurans (strain ATCC 13939 / DSM 20539 / JCM 16871 / CCUG 27074 / LMG 4051 / NBRC 15346 / NCIMB 9279 / VKM B-1422 / R1)</name>
    <dbReference type="NCBI Taxonomy" id="243230"/>
    <lineage>
        <taxon>Bacteria</taxon>
        <taxon>Thermotogati</taxon>
        <taxon>Deinococcota</taxon>
        <taxon>Deinococci</taxon>
        <taxon>Deinococcales</taxon>
        <taxon>Deinococcaceae</taxon>
        <taxon>Deinococcus</taxon>
    </lineage>
</organism>
<evidence type="ECO:0000255" key="1">
    <source>
        <dbReference type="HAMAP-Rule" id="MF_00028"/>
    </source>
</evidence>
<evidence type="ECO:0000305" key="2"/>
<sequence length="474" mass="50363">MVQGCTSNAGKSYLCAALCRMLSDEGLRVAPFKAQNMSNNAGVTPPESSAPGLEMGRAQLVQARAARVVPDVRMNPVLLKPEADTSSQVVLLGRAAPELTALPWRERKPRLWPFVKGALHSLLDEFDVVVIEGAGSPAEVNLRPSDIVNMRVAREARAAVLLAADIDRGGAFAHLLGTWHCLMPEERALMRGFILNRFRGDASLLAPAPEWLEEQTGVPTLGVVPWLNVALPEEDGVAVEAPAAIIPSPSTGFVAIPRLPRVSNLDEFAPLGELARWVTSPQELAGARAVILPGSKSTAADLAWLRATGLAGAVTRLAVQGVPVLGICGGLQMLGQTLSDPQGVEGGSAASGGKVYGLGLLDLHTAFAADKTTRLSEVRDPETGLRLQGYEIHHGQTRSGPGVQTLVPGLLWRSGNVRGTYLHGLLENSAYLEHFLRWADLPVPACLDSLDARLDAIAAQVQAGLSWDRVRALL</sequence>
<gene>
    <name evidence="1" type="primary">cobQ</name>
    <name type="ordered locus">DR_B0012</name>
</gene>
<keyword id="KW-0169">Cobalamin biosynthesis</keyword>
<keyword id="KW-0315">Glutamine amidotransferase</keyword>
<keyword id="KW-0614">Plasmid</keyword>
<keyword id="KW-1185">Reference proteome</keyword>
<protein>
    <recommendedName>
        <fullName evidence="1">Cobyric acid synthase</fullName>
    </recommendedName>
</protein>
<geneLocation type="plasmid">
    <name>megaplasmid MP1</name>
</geneLocation>
<reference key="1">
    <citation type="journal article" date="1999" name="Science">
        <title>Genome sequence of the radioresistant bacterium Deinococcus radiodurans R1.</title>
        <authorList>
            <person name="White O."/>
            <person name="Eisen J.A."/>
            <person name="Heidelberg J.F."/>
            <person name="Hickey E.K."/>
            <person name="Peterson J.D."/>
            <person name="Dodson R.J."/>
            <person name="Haft D.H."/>
            <person name="Gwinn M.L."/>
            <person name="Nelson W.C."/>
            <person name="Richardson D.L."/>
            <person name="Moffat K.S."/>
            <person name="Qin H."/>
            <person name="Jiang L."/>
            <person name="Pamphile W."/>
            <person name="Crosby M."/>
            <person name="Shen M."/>
            <person name="Vamathevan J.J."/>
            <person name="Lam P."/>
            <person name="McDonald L.A."/>
            <person name="Utterback T.R."/>
            <person name="Zalewski C."/>
            <person name="Makarova K.S."/>
            <person name="Aravind L."/>
            <person name="Daly M.J."/>
            <person name="Minton K.W."/>
            <person name="Fleischmann R.D."/>
            <person name="Ketchum K.A."/>
            <person name="Nelson K.E."/>
            <person name="Salzberg S.L."/>
            <person name="Smith H.O."/>
            <person name="Venter J.C."/>
            <person name="Fraser C.M."/>
        </authorList>
    </citation>
    <scope>NUCLEOTIDE SEQUENCE [LARGE SCALE GENOMIC DNA]</scope>
    <source>
        <strain>ATCC 13939 / DSM 20539 / JCM 16871 / CCUG 27074 / LMG 4051 / NBRC 15346 / NCIMB 9279 / VKM B-1422 / R1</strain>
    </source>
</reference>
<proteinExistence type="inferred from homology"/>